<reference evidence="3" key="1">
    <citation type="journal article" date="2007" name="Nature">
        <title>Evolution of genes and genomes on the Drosophila phylogeny.</title>
        <authorList>
            <consortium name="Drosophila 12 genomes consortium"/>
        </authorList>
    </citation>
    <scope>NUCLEOTIDE SEQUENCE [LARGE SCALE GENOMIC DNA]</scope>
    <source>
        <strain evidence="3">Rob3c / Tucson 14021-0248.25</strain>
    </source>
</reference>
<protein>
    <recommendedName>
        <fullName>DM7 family protein GM11956</fullName>
    </recommendedName>
</protein>
<keyword id="KW-1185">Reference proteome</keyword>
<keyword id="KW-0677">Repeat</keyword>
<dbReference type="EMBL" id="CH480865">
    <property type="protein sequence ID" value="EDW53685.1"/>
    <property type="molecule type" value="Genomic_DNA"/>
</dbReference>
<dbReference type="EnsemblMetazoa" id="FBtr0194941">
    <property type="protein sequence ID" value="FBpp0193433"/>
    <property type="gene ID" value="FBgn0166897"/>
</dbReference>
<dbReference type="EnsemblMetazoa" id="XM_002044442.2">
    <property type="protein sequence ID" value="XP_002044478.1"/>
    <property type="gene ID" value="LOC6620270"/>
</dbReference>
<dbReference type="GeneID" id="6620270"/>
<dbReference type="KEGG" id="dse:6620270"/>
<dbReference type="HOGENOM" id="CLU_477581_0_0_1"/>
<dbReference type="OMA" id="KICREEP"/>
<dbReference type="OrthoDB" id="66816at7215"/>
<dbReference type="PhylomeDB" id="B4IL68"/>
<dbReference type="Proteomes" id="UP000001292">
    <property type="component" value="Unassembled WGS sequence"/>
</dbReference>
<dbReference type="InterPro" id="IPR006610">
    <property type="entry name" value="DM7"/>
</dbReference>
<dbReference type="SMART" id="SM00688">
    <property type="entry name" value="DM7"/>
    <property type="match status" value="2"/>
</dbReference>
<name>DM7A_DROSE</name>
<gene>
    <name type="ORF">GM11956</name>
</gene>
<proteinExistence type="inferred from homology"/>
<evidence type="ECO:0000255" key="1"/>
<evidence type="ECO:0000256" key="2">
    <source>
        <dbReference type="SAM" id="MobiDB-lite"/>
    </source>
</evidence>
<evidence type="ECO:0000312" key="3">
    <source>
        <dbReference type="EMBL" id="EDW53685.1"/>
    </source>
</evidence>
<comment type="similarity">
    <text evidence="1">Belongs to the DM7 family.</text>
</comment>
<accession>B4IL68</accession>
<sequence>MLRMDTVHRDKGQVVILKKTNYLPYLVNLFIPKLFYPEKIVVARLYINVNKHDKHAAENFKGTETPCFDVPPSLFSDKVPMDKIVFLPTVMLPMGFEAGGVFGPGVLTRRSYPIDLKAAGHKGQTPPLFVGLRMDIQAPTRVKSLLKEVRESQPAQDILMNWVRASNNLINGEQPKEQELRDEFSLSMVFNLPTPPSPPSPYPYGRIPLQFNIYTPDLSNVLLLMSHQRDLTVAILSTVNNPHVPSVAFAAMGDEEECPKFELPLSAFPTFEGVNRPMFLPKRFMPKGFEAGCVLKPGALSDRWFMDNIGRFGPTQPQHNGSITPPLFVGKICREEPTVDMIRNIQLEIEKKASEDATLPAVKPKIDISITKGFMVMETAAEDPKPPKGAYSVQSYEEAFDDGCVVKVAKKVATEATDTRGRDEIRTSCDQPQEKDEGSAEADKKHLSCFHVDSDIDNIAMAMARMGVADISLPAEGEAMPGIDGDRALIQLSHVLEDRNQIRSHTDQLMQDHIFRMNRNRMLALRQPFTCIGCGTQENK</sequence>
<organism>
    <name type="scientific">Drosophila sechellia</name>
    <name type="common">Fruit fly</name>
    <dbReference type="NCBI Taxonomy" id="7238"/>
    <lineage>
        <taxon>Eukaryota</taxon>
        <taxon>Metazoa</taxon>
        <taxon>Ecdysozoa</taxon>
        <taxon>Arthropoda</taxon>
        <taxon>Hexapoda</taxon>
        <taxon>Insecta</taxon>
        <taxon>Pterygota</taxon>
        <taxon>Neoptera</taxon>
        <taxon>Endopterygota</taxon>
        <taxon>Diptera</taxon>
        <taxon>Brachycera</taxon>
        <taxon>Muscomorpha</taxon>
        <taxon>Ephydroidea</taxon>
        <taxon>Drosophilidae</taxon>
        <taxon>Drosophila</taxon>
        <taxon>Sophophora</taxon>
    </lineage>
</organism>
<feature type="chain" id="PRO_0000378604" description="DM7 family protein GM11956">
    <location>
        <begin position="1"/>
        <end position="540"/>
    </location>
</feature>
<feature type="region of interest" description="Disordered" evidence="2">
    <location>
        <begin position="416"/>
        <end position="443"/>
    </location>
</feature>
<feature type="compositionally biased region" description="Basic and acidic residues" evidence="2">
    <location>
        <begin position="417"/>
        <end position="443"/>
    </location>
</feature>